<evidence type="ECO:0000255" key="1">
    <source>
        <dbReference type="HAMAP-Rule" id="MF_01282"/>
    </source>
</evidence>
<name>VGB_MYCSK</name>
<feature type="chain" id="PRO_0000313773" description="Virginiamycin B lyase">
    <location>
        <begin position="1"/>
        <end position="280"/>
    </location>
</feature>
<feature type="active site" description="Proton acceptor" evidence="1">
    <location>
        <position position="256"/>
    </location>
</feature>
<feature type="binding site" evidence="1">
    <location>
        <position position="215"/>
    </location>
    <ligand>
        <name>substrate</name>
    </ligand>
</feature>
<feature type="binding site" evidence="1">
    <location>
        <position position="254"/>
    </location>
    <ligand>
        <name>Mg(2+)</name>
        <dbReference type="ChEBI" id="CHEBI:18420"/>
    </ligand>
</feature>
<feature type="binding site" evidence="1">
    <location>
        <position position="271"/>
    </location>
    <ligand>
        <name>Mg(2+)</name>
        <dbReference type="ChEBI" id="CHEBI:18420"/>
    </ligand>
</feature>
<reference key="1">
    <citation type="submission" date="2006-12" db="EMBL/GenBank/DDBJ databases">
        <title>Complete sequence of chromosome of Mycobacterium sp. KMS.</title>
        <authorList>
            <consortium name="US DOE Joint Genome Institute"/>
            <person name="Copeland A."/>
            <person name="Lucas S."/>
            <person name="Lapidus A."/>
            <person name="Barry K."/>
            <person name="Detter J.C."/>
            <person name="Glavina del Rio T."/>
            <person name="Hammon N."/>
            <person name="Israni S."/>
            <person name="Dalin E."/>
            <person name="Tice H."/>
            <person name="Pitluck S."/>
            <person name="Kiss H."/>
            <person name="Brettin T."/>
            <person name="Bruce D."/>
            <person name="Han C."/>
            <person name="Tapia R."/>
            <person name="Gilna P."/>
            <person name="Schmutz J."/>
            <person name="Larimer F."/>
            <person name="Land M."/>
            <person name="Hauser L."/>
            <person name="Kyrpides N."/>
            <person name="Mikhailova N."/>
            <person name="Miller C.D."/>
            <person name="Richardson P."/>
        </authorList>
    </citation>
    <scope>NUCLEOTIDE SEQUENCE [LARGE SCALE GENOMIC DNA]</scope>
    <source>
        <strain>KMS</strain>
    </source>
</reference>
<sequence length="280" mass="28958">MSLIREIAGGPYALAAGPDGAMWVTLVHDGAIARVGADGAVDRFPVADGSRPSLISAGPDGALWFTRNGDDRIGRLTTAGELTEFPLSEGSAPFGICAGADGALWFTEMGSGGIGRITVDGQTSGWASVGGTPSMITRGPDDAVWFTLNQGNAIGRLHPRDGVTMRELPTRGAGPVGITATHDDAIWFTEILADKLGRIPLDGALQEIDLPGKPHAVVADPSGGVWVSLWGADRLARVSADGDIETFDLPPGSEPHGLAFGPDGGLWVALESGFVLRMPD</sequence>
<keyword id="KW-0046">Antibiotic resistance</keyword>
<keyword id="KW-0456">Lyase</keyword>
<keyword id="KW-0460">Magnesium</keyword>
<keyword id="KW-0479">Metal-binding</keyword>
<gene>
    <name evidence="1" type="primary">vgb</name>
    <name type="ordered locus">Mkms_3932</name>
</gene>
<accession>A1UJW6</accession>
<proteinExistence type="inferred from homology"/>
<protein>
    <recommendedName>
        <fullName evidence="1">Virginiamycin B lyase</fullName>
        <ecNumber evidence="1">4.2.99.-</ecNumber>
    </recommendedName>
    <alternativeName>
        <fullName evidence="1">Streptogramin B lyase</fullName>
    </alternativeName>
</protein>
<organism>
    <name type="scientific">Mycobacterium sp. (strain KMS)</name>
    <dbReference type="NCBI Taxonomy" id="189918"/>
    <lineage>
        <taxon>Bacteria</taxon>
        <taxon>Bacillati</taxon>
        <taxon>Actinomycetota</taxon>
        <taxon>Actinomycetes</taxon>
        <taxon>Mycobacteriales</taxon>
        <taxon>Mycobacteriaceae</taxon>
        <taxon>Mycobacterium</taxon>
    </lineage>
</organism>
<comment type="function">
    <text evidence="1">Inactivates the type B streptogramin antibiotics by linearizing the lactone ring at the ester linkage, generating a free phenylglycine carboxylate and converting the threonyl moiety into 2-amino-butenoic acid.</text>
</comment>
<comment type="cofactor">
    <cofactor evidence="1">
        <name>Mg(2+)</name>
        <dbReference type="ChEBI" id="CHEBI:18420"/>
    </cofactor>
</comment>
<comment type="subunit">
    <text evidence="1">Monomer.</text>
</comment>
<comment type="similarity">
    <text evidence="1">Belongs to the Vgb family.</text>
</comment>
<dbReference type="EC" id="4.2.99.-" evidence="1"/>
<dbReference type="EMBL" id="CP000518">
    <property type="protein sequence ID" value="ABL93124.1"/>
    <property type="molecule type" value="Genomic_DNA"/>
</dbReference>
<dbReference type="SMR" id="A1UJW6"/>
<dbReference type="STRING" id="189918.Mkms_3932"/>
<dbReference type="KEGG" id="mkm:Mkms_3932"/>
<dbReference type="HOGENOM" id="CLU_054751_1_0_11"/>
<dbReference type="OrthoDB" id="9812926at2"/>
<dbReference type="GO" id="GO:0030288">
    <property type="term" value="C:outer membrane-bounded periplasmic space"/>
    <property type="evidence" value="ECO:0007669"/>
    <property type="project" value="TreeGrafter"/>
</dbReference>
<dbReference type="GO" id="GO:0016835">
    <property type="term" value="F:carbon-oxygen lyase activity"/>
    <property type="evidence" value="ECO:0007669"/>
    <property type="project" value="UniProtKB-UniRule"/>
</dbReference>
<dbReference type="GO" id="GO:0000287">
    <property type="term" value="F:magnesium ion binding"/>
    <property type="evidence" value="ECO:0007669"/>
    <property type="project" value="InterPro"/>
</dbReference>
<dbReference type="GO" id="GO:0017001">
    <property type="term" value="P:antibiotic catabolic process"/>
    <property type="evidence" value="ECO:0007669"/>
    <property type="project" value="UniProtKB-UniRule"/>
</dbReference>
<dbReference type="GO" id="GO:0046677">
    <property type="term" value="P:response to antibiotic"/>
    <property type="evidence" value="ECO:0007669"/>
    <property type="project" value="UniProtKB-KW"/>
</dbReference>
<dbReference type="Gene3D" id="2.130.10.10">
    <property type="entry name" value="YVTN repeat-like/Quinoprotein amine dehydrogenase"/>
    <property type="match status" value="2"/>
</dbReference>
<dbReference type="HAMAP" id="MF_01282">
    <property type="entry name" value="VirginiamycinB_lyase"/>
    <property type="match status" value="1"/>
</dbReference>
<dbReference type="InterPro" id="IPR011044">
    <property type="entry name" value="Quino_amine_DH_bsu"/>
</dbReference>
<dbReference type="InterPro" id="IPR011217">
    <property type="entry name" value="Streptogrm_lyase"/>
</dbReference>
<dbReference type="InterPro" id="IPR051344">
    <property type="entry name" value="Vgb"/>
</dbReference>
<dbReference type="InterPro" id="IPR015943">
    <property type="entry name" value="WD40/YVTN_repeat-like_dom_sf"/>
</dbReference>
<dbReference type="PANTHER" id="PTHR40274">
    <property type="entry name" value="VIRGINIAMYCIN B LYASE"/>
    <property type="match status" value="1"/>
</dbReference>
<dbReference type="PANTHER" id="PTHR40274:SF3">
    <property type="entry name" value="VIRGINIAMYCIN B LYASE"/>
    <property type="match status" value="1"/>
</dbReference>
<dbReference type="Pfam" id="PF24684">
    <property type="entry name" value="Vgb_lyase"/>
    <property type="match status" value="1"/>
</dbReference>
<dbReference type="SUPFAM" id="SSF63829">
    <property type="entry name" value="Calcium-dependent phosphotriesterase"/>
    <property type="match status" value="1"/>
</dbReference>
<dbReference type="SUPFAM" id="SSF50969">
    <property type="entry name" value="YVTN repeat-like/Quinoprotein amine dehydrogenase"/>
    <property type="match status" value="1"/>
</dbReference>